<protein>
    <recommendedName>
        <fullName>Pyruvate carboxylase</fullName>
        <ecNumber>6.4.1.1</ecNumber>
    </recommendedName>
    <alternativeName>
        <fullName>Pyruvic carboxylase</fullName>
        <shortName>PCB</shortName>
    </alternativeName>
</protein>
<proteinExistence type="inferred from homology"/>
<accession>Q0CLK1</accession>
<sequence>MAAPYRQPEEAVDDSEFIDDHHDHLRDTVHHRLRANSAIMQFQKILVANRGEIPIRIFRTAHELSLQTVAIFSHEDRLSMHRQKADEAYMIGHRGQYTPVGAYLAADEIVKIALEHGVHLIHPGYGFLSENADFARKVEKAGMVFVGPTPDTIDSLGDKVSARQLAIRCNVPVVPGTEGPVERYEEVKAFTDTYGFPIIIKAAFGGGGRGMRVVRNQADLRDSFERATSEARSAFGNGTVFVERFLDKPKHIEVQLLGDNHGNVVHLFERDCSVQRRHQKVVEVAPAKDLPTDVRDRILSDAVKLAKSVNYRNAGTAEFLVDQQNRHYFIEINPRIQVEHTITEEITGIDIVAAQIQIAAGATLEQLGLTQDRISTRGFAIQCRITTEDPSKGFSPDTGKIEVYRSAGGNGVRLDGGNGFAGAIITPHYDSMLVKCTCRGSTYEIARRKVVRALVEFRIRGVKTNIPFLTSLLSHPTFVDGNCWTTFIDDTTELFALVGSQNRAQKLLAYLGDVAVNGSSIKGQMGEPKFKGEIIKPKLLDAQGKPLDVSHPCTKGWKQIIDQEGPVAFAKAVRANKGCLIMDTTWRDAHQSLLATRVRTIDLLNIAHETSHALSNAYSLECWGGATFDVAMRFLYEDPWDRLRKMRKAVPNIPFQMLLRGANGVAYSSLPDNAIYHFCKNAKKCGVDIFRVFDALNDVDQLEVGIKAVHAAEGVVEATVCYSGDMLNPKKKYNLEYYLALVDKIVALKPHVLGIKDMAGVLKPQAARLLVGSIRERYPDLPIHVHTHDSAGTGVASMIACAQAGADAVDAATDSMSGMTSQPSIGAILASLEGTEHDPGLNSAHVRALDSYWAQLRLLYSPFEANLTGPDPEVYEHEIPGGQLTNLIFQASQLGLGQQWAETKKAYEVANDLLGDIVKVTPTSKVVGDLAQFIVSNKLSAQDVIDRAAELDFPGSVLEFLEGLMGQPFGGFPEPLRSRALRNRRKLDKRPGLYLEPLDLAAIKNQIREQFGSATEYDVASYAMYPKVFEDYKKFVQKYGDLSVLPTRYFLAKPEIGEEFHVELEKGKMLILKLLAIGPLSEQTGQREVFYEVNGEVRQVSIDDKKASIDNTARPKADVGDSSQVGAPMSGVVVEIRVHDGLEVKKGDPLAVLSAMKMEMVISAPHSGKVSGLLVKEGDSVDGQDLVCKITKA</sequence>
<dbReference type="EC" id="6.4.1.1"/>
<dbReference type="EMBL" id="CH476600">
    <property type="protein sequence ID" value="EAU34502.1"/>
    <property type="status" value="ALT_FRAME"/>
    <property type="molecule type" value="Genomic_DNA"/>
</dbReference>
<dbReference type="RefSeq" id="XP_001214611.1">
    <property type="nucleotide sequence ID" value="XM_001214611.1"/>
</dbReference>
<dbReference type="SMR" id="Q0CLK1"/>
<dbReference type="STRING" id="341663.Q0CLK1"/>
<dbReference type="GeneID" id="4320946"/>
<dbReference type="eggNOG" id="KOG0369">
    <property type="taxonomic scope" value="Eukaryota"/>
</dbReference>
<dbReference type="OrthoDB" id="196847at2759"/>
<dbReference type="UniPathway" id="UPA00138"/>
<dbReference type="Proteomes" id="UP000007963">
    <property type="component" value="Unassembled WGS sequence"/>
</dbReference>
<dbReference type="GO" id="GO:0005737">
    <property type="term" value="C:cytoplasm"/>
    <property type="evidence" value="ECO:0007669"/>
    <property type="project" value="UniProtKB-SubCell"/>
</dbReference>
<dbReference type="GO" id="GO:0005524">
    <property type="term" value="F:ATP binding"/>
    <property type="evidence" value="ECO:0007669"/>
    <property type="project" value="UniProtKB-KW"/>
</dbReference>
<dbReference type="GO" id="GO:0046872">
    <property type="term" value="F:metal ion binding"/>
    <property type="evidence" value="ECO:0007669"/>
    <property type="project" value="UniProtKB-KW"/>
</dbReference>
<dbReference type="GO" id="GO:0004736">
    <property type="term" value="F:pyruvate carboxylase activity"/>
    <property type="evidence" value="ECO:0007669"/>
    <property type="project" value="UniProtKB-EC"/>
</dbReference>
<dbReference type="GO" id="GO:0006094">
    <property type="term" value="P:gluconeogenesis"/>
    <property type="evidence" value="ECO:0007669"/>
    <property type="project" value="UniProtKB-UniPathway"/>
</dbReference>
<dbReference type="CDD" id="cd06850">
    <property type="entry name" value="biotinyl_domain"/>
    <property type="match status" value="1"/>
</dbReference>
<dbReference type="CDD" id="cd07937">
    <property type="entry name" value="DRE_TIM_PC_TC_5S"/>
    <property type="match status" value="1"/>
</dbReference>
<dbReference type="FunFam" id="2.40.50.100:FF:000003">
    <property type="entry name" value="Acetyl-CoA carboxylase biotin carboxyl carrier protein"/>
    <property type="match status" value="1"/>
</dbReference>
<dbReference type="FunFam" id="3.30.1490.20:FF:000018">
    <property type="entry name" value="Biotin carboxylase"/>
    <property type="match status" value="1"/>
</dbReference>
<dbReference type="FunFam" id="3.40.50.20:FF:000010">
    <property type="entry name" value="Propionyl-CoA carboxylase subunit alpha"/>
    <property type="match status" value="1"/>
</dbReference>
<dbReference type="FunFam" id="3.10.600.10:FF:000002">
    <property type="entry name" value="Pyruvate carboxylase"/>
    <property type="match status" value="1"/>
</dbReference>
<dbReference type="FunFam" id="3.20.20.70:FF:000033">
    <property type="entry name" value="Pyruvate carboxylase"/>
    <property type="match status" value="1"/>
</dbReference>
<dbReference type="FunFam" id="3.30.470.20:FF:000012">
    <property type="entry name" value="Pyruvate carboxylase"/>
    <property type="match status" value="1"/>
</dbReference>
<dbReference type="Gene3D" id="2.40.50.100">
    <property type="match status" value="1"/>
</dbReference>
<dbReference type="Gene3D" id="3.20.20.70">
    <property type="entry name" value="Aldolase class I"/>
    <property type="match status" value="1"/>
</dbReference>
<dbReference type="Gene3D" id="3.30.470.20">
    <property type="entry name" value="ATP-grasp fold, B domain"/>
    <property type="match status" value="1"/>
</dbReference>
<dbReference type="Gene3D" id="3.10.600.10">
    <property type="entry name" value="pyruvate carboxylase f1077a mutant domain"/>
    <property type="match status" value="1"/>
</dbReference>
<dbReference type="InterPro" id="IPR013785">
    <property type="entry name" value="Aldolase_TIM"/>
</dbReference>
<dbReference type="InterPro" id="IPR011761">
    <property type="entry name" value="ATP-grasp"/>
</dbReference>
<dbReference type="InterPro" id="IPR005481">
    <property type="entry name" value="BC-like_N"/>
</dbReference>
<dbReference type="InterPro" id="IPR001882">
    <property type="entry name" value="Biotin_BS"/>
</dbReference>
<dbReference type="InterPro" id="IPR011764">
    <property type="entry name" value="Biotin_carboxylation_dom"/>
</dbReference>
<dbReference type="InterPro" id="IPR005482">
    <property type="entry name" value="Biotin_COase_C"/>
</dbReference>
<dbReference type="InterPro" id="IPR000089">
    <property type="entry name" value="Biotin_lipoyl"/>
</dbReference>
<dbReference type="InterPro" id="IPR003379">
    <property type="entry name" value="Carboxylase_cons_dom"/>
</dbReference>
<dbReference type="InterPro" id="IPR005479">
    <property type="entry name" value="CbamoylP_synth_lsu-like_ATP-bd"/>
</dbReference>
<dbReference type="InterPro" id="IPR055268">
    <property type="entry name" value="PCB-like"/>
</dbReference>
<dbReference type="InterPro" id="IPR016185">
    <property type="entry name" value="PreATP-grasp_dom_sf"/>
</dbReference>
<dbReference type="InterPro" id="IPR000891">
    <property type="entry name" value="PYR_CT"/>
</dbReference>
<dbReference type="InterPro" id="IPR005930">
    <property type="entry name" value="Pyruv_COase"/>
</dbReference>
<dbReference type="InterPro" id="IPR011054">
    <property type="entry name" value="Rudment_hybrid_motif"/>
</dbReference>
<dbReference type="InterPro" id="IPR011053">
    <property type="entry name" value="Single_hybrid_motif"/>
</dbReference>
<dbReference type="NCBIfam" id="NF006761">
    <property type="entry name" value="PRK09282.1"/>
    <property type="match status" value="1"/>
</dbReference>
<dbReference type="NCBIfam" id="NF009554">
    <property type="entry name" value="PRK12999.1"/>
    <property type="match status" value="1"/>
</dbReference>
<dbReference type="NCBIfam" id="TIGR01235">
    <property type="entry name" value="pyruv_carbox"/>
    <property type="match status" value="1"/>
</dbReference>
<dbReference type="PANTHER" id="PTHR43778">
    <property type="entry name" value="PYRUVATE CARBOXYLASE"/>
    <property type="match status" value="1"/>
</dbReference>
<dbReference type="PANTHER" id="PTHR43778:SF2">
    <property type="entry name" value="PYRUVATE CARBOXYLASE, MITOCHONDRIAL"/>
    <property type="match status" value="1"/>
</dbReference>
<dbReference type="Pfam" id="PF02785">
    <property type="entry name" value="Biotin_carb_C"/>
    <property type="match status" value="1"/>
</dbReference>
<dbReference type="Pfam" id="PF00289">
    <property type="entry name" value="Biotin_carb_N"/>
    <property type="match status" value="1"/>
</dbReference>
<dbReference type="Pfam" id="PF00364">
    <property type="entry name" value="Biotin_lipoyl"/>
    <property type="match status" value="1"/>
</dbReference>
<dbReference type="Pfam" id="PF02786">
    <property type="entry name" value="CPSase_L_D2"/>
    <property type="match status" value="1"/>
</dbReference>
<dbReference type="Pfam" id="PF00682">
    <property type="entry name" value="HMGL-like"/>
    <property type="match status" value="1"/>
</dbReference>
<dbReference type="Pfam" id="PF02436">
    <property type="entry name" value="PYC_OADA"/>
    <property type="match status" value="1"/>
</dbReference>
<dbReference type="PIRSF" id="PIRSF001594">
    <property type="entry name" value="Pyruv_carbox"/>
    <property type="match status" value="1"/>
</dbReference>
<dbReference type="SMART" id="SM00878">
    <property type="entry name" value="Biotin_carb_C"/>
    <property type="match status" value="1"/>
</dbReference>
<dbReference type="SUPFAM" id="SSF51569">
    <property type="entry name" value="Aldolase"/>
    <property type="match status" value="1"/>
</dbReference>
<dbReference type="SUPFAM" id="SSF56059">
    <property type="entry name" value="Glutathione synthetase ATP-binding domain-like"/>
    <property type="match status" value="1"/>
</dbReference>
<dbReference type="SUPFAM" id="SSF89000">
    <property type="entry name" value="post-HMGL domain-like"/>
    <property type="match status" value="1"/>
</dbReference>
<dbReference type="SUPFAM" id="SSF52440">
    <property type="entry name" value="PreATP-grasp domain"/>
    <property type="match status" value="1"/>
</dbReference>
<dbReference type="SUPFAM" id="SSF51246">
    <property type="entry name" value="Rudiment single hybrid motif"/>
    <property type="match status" value="1"/>
</dbReference>
<dbReference type="SUPFAM" id="SSF51230">
    <property type="entry name" value="Single hybrid motif"/>
    <property type="match status" value="1"/>
</dbReference>
<dbReference type="PROSITE" id="PS50975">
    <property type="entry name" value="ATP_GRASP"/>
    <property type="match status" value="1"/>
</dbReference>
<dbReference type="PROSITE" id="PS50979">
    <property type="entry name" value="BC"/>
    <property type="match status" value="1"/>
</dbReference>
<dbReference type="PROSITE" id="PS00188">
    <property type="entry name" value="BIOTIN"/>
    <property type="match status" value="1"/>
</dbReference>
<dbReference type="PROSITE" id="PS50968">
    <property type="entry name" value="BIOTINYL_LIPOYL"/>
    <property type="match status" value="1"/>
</dbReference>
<dbReference type="PROSITE" id="PS00866">
    <property type="entry name" value="CPSASE_1"/>
    <property type="match status" value="1"/>
</dbReference>
<dbReference type="PROSITE" id="PS00867">
    <property type="entry name" value="CPSASE_2"/>
    <property type="match status" value="1"/>
</dbReference>
<dbReference type="PROSITE" id="PS50991">
    <property type="entry name" value="PYR_CT"/>
    <property type="match status" value="1"/>
</dbReference>
<evidence type="ECO:0000250" key="1"/>
<evidence type="ECO:0000255" key="2">
    <source>
        <dbReference type="PROSITE-ProRule" id="PRU00409"/>
    </source>
</evidence>
<evidence type="ECO:0000255" key="3">
    <source>
        <dbReference type="PROSITE-ProRule" id="PRU01066"/>
    </source>
</evidence>
<evidence type="ECO:0000255" key="4">
    <source>
        <dbReference type="PROSITE-ProRule" id="PRU01151"/>
    </source>
</evidence>
<evidence type="ECO:0000305" key="5"/>
<gene>
    <name type="primary">pyc</name>
    <name type="ORF">ATEG_05433</name>
</gene>
<comment type="function">
    <text evidence="1">Pyruvate carboxylase catalyzes a 2-step reaction, involving the ATP-dependent carboxylation of the covalently attached biotin in the first step and the transfer of the carboxyl group to pyruvate in the second.</text>
</comment>
<comment type="catalytic activity">
    <reaction>
        <text>hydrogencarbonate + pyruvate + ATP = oxaloacetate + ADP + phosphate + H(+)</text>
        <dbReference type="Rhea" id="RHEA:20844"/>
        <dbReference type="ChEBI" id="CHEBI:15361"/>
        <dbReference type="ChEBI" id="CHEBI:15378"/>
        <dbReference type="ChEBI" id="CHEBI:16452"/>
        <dbReference type="ChEBI" id="CHEBI:17544"/>
        <dbReference type="ChEBI" id="CHEBI:30616"/>
        <dbReference type="ChEBI" id="CHEBI:43474"/>
        <dbReference type="ChEBI" id="CHEBI:456216"/>
        <dbReference type="EC" id="6.4.1.1"/>
    </reaction>
</comment>
<comment type="cofactor">
    <cofactor evidence="1">
        <name>biotin</name>
        <dbReference type="ChEBI" id="CHEBI:57586"/>
    </cofactor>
</comment>
<comment type="cofactor">
    <cofactor evidence="1">
        <name>Zn(2+)</name>
        <dbReference type="ChEBI" id="CHEBI:29105"/>
    </cofactor>
</comment>
<comment type="pathway">
    <text>Carbohydrate biosynthesis; gluconeogenesis.</text>
</comment>
<comment type="subcellular location">
    <subcellularLocation>
        <location evidence="1">Cytoplasm</location>
    </subcellularLocation>
</comment>
<comment type="sequence caution" evidence="5">
    <conflict type="frameshift">
        <sequence resource="EMBL-CDS" id="EAU34502"/>
    </conflict>
</comment>
<reference key="1">
    <citation type="submission" date="2005-09" db="EMBL/GenBank/DDBJ databases">
        <title>Annotation of the Aspergillus terreus NIH2624 genome.</title>
        <authorList>
            <person name="Birren B.W."/>
            <person name="Lander E.S."/>
            <person name="Galagan J.E."/>
            <person name="Nusbaum C."/>
            <person name="Devon K."/>
            <person name="Henn M."/>
            <person name="Ma L.-J."/>
            <person name="Jaffe D.B."/>
            <person name="Butler J."/>
            <person name="Alvarez P."/>
            <person name="Gnerre S."/>
            <person name="Grabherr M."/>
            <person name="Kleber M."/>
            <person name="Mauceli E.W."/>
            <person name="Brockman W."/>
            <person name="Rounsley S."/>
            <person name="Young S.K."/>
            <person name="LaButti K."/>
            <person name="Pushparaj V."/>
            <person name="DeCaprio D."/>
            <person name="Crawford M."/>
            <person name="Koehrsen M."/>
            <person name="Engels R."/>
            <person name="Montgomery P."/>
            <person name="Pearson M."/>
            <person name="Howarth C."/>
            <person name="Larson L."/>
            <person name="Luoma S."/>
            <person name="White J."/>
            <person name="Alvarado L."/>
            <person name="Kodira C.D."/>
            <person name="Zeng Q."/>
            <person name="Oleary S."/>
            <person name="Yandava C."/>
            <person name="Denning D.W."/>
            <person name="Nierman W.C."/>
            <person name="Milne T."/>
            <person name="Madden K."/>
        </authorList>
    </citation>
    <scope>NUCLEOTIDE SEQUENCE [LARGE SCALE GENOMIC DNA]</scope>
    <source>
        <strain>NIH 2624 / FGSC A1156</strain>
    </source>
</reference>
<name>PYC_ASPTN</name>
<keyword id="KW-0067">ATP-binding</keyword>
<keyword id="KW-0092">Biotin</keyword>
<keyword id="KW-0963">Cytoplasm</keyword>
<keyword id="KW-0312">Gluconeogenesis</keyword>
<keyword id="KW-0436">Ligase</keyword>
<keyword id="KW-0479">Metal-binding</keyword>
<keyword id="KW-0511">Multifunctional enzyme</keyword>
<keyword id="KW-0547">Nucleotide-binding</keyword>
<keyword id="KW-0670">Pyruvate</keyword>
<keyword id="KW-1185">Reference proteome</keyword>
<keyword id="KW-0862">Zinc</keyword>
<feature type="chain" id="PRO_0000283709" description="Pyruvate carboxylase">
    <location>
        <begin position="1"/>
        <end position="1193"/>
    </location>
</feature>
<feature type="domain" description="Biotin carboxylation">
    <location>
        <begin position="41"/>
        <end position="493"/>
    </location>
</feature>
<feature type="domain" description="ATP-grasp" evidence="2">
    <location>
        <begin position="163"/>
        <end position="360"/>
    </location>
</feature>
<feature type="domain" description="Pyruvate carboxyltransferase" evidence="4">
    <location>
        <begin position="579"/>
        <end position="847"/>
    </location>
</feature>
<feature type="domain" description="Biotinyl-binding" evidence="3">
    <location>
        <begin position="1116"/>
        <end position="1191"/>
    </location>
</feature>
<feature type="active site" evidence="1">
    <location>
        <position position="335"/>
    </location>
</feature>
<feature type="binding site" evidence="1">
    <location>
        <position position="159"/>
    </location>
    <ligand>
        <name>ATP</name>
        <dbReference type="ChEBI" id="CHEBI:30616"/>
    </ligand>
</feature>
<feature type="binding site" evidence="1">
    <location>
        <position position="243"/>
    </location>
    <ligand>
        <name>ATP</name>
        <dbReference type="ChEBI" id="CHEBI:30616"/>
    </ligand>
</feature>
<feature type="binding site" evidence="1">
    <location>
        <position position="278"/>
    </location>
    <ligand>
        <name>ATP</name>
        <dbReference type="ChEBI" id="CHEBI:30616"/>
    </ligand>
</feature>
<feature type="binding site" evidence="1">
    <location>
        <begin position="587"/>
        <end position="591"/>
    </location>
    <ligand>
        <name>substrate</name>
    </ligand>
</feature>
<feature type="binding site" evidence="1">
    <location>
        <position position="588"/>
    </location>
    <ligand>
        <name>a divalent metal cation</name>
        <dbReference type="ChEBI" id="CHEBI:60240"/>
    </ligand>
</feature>
<feature type="binding site" evidence="1">
    <location>
        <position position="660"/>
    </location>
    <ligand>
        <name>substrate</name>
    </ligand>
</feature>
<feature type="binding site" description="via carbamate group" evidence="1">
    <location>
        <position position="756"/>
    </location>
    <ligand>
        <name>a divalent metal cation</name>
        <dbReference type="ChEBI" id="CHEBI:60240"/>
    </ligand>
</feature>
<feature type="binding site" evidence="1">
    <location>
        <position position="786"/>
    </location>
    <ligand>
        <name>a divalent metal cation</name>
        <dbReference type="ChEBI" id="CHEBI:60240"/>
    </ligand>
</feature>
<feature type="binding site" evidence="1">
    <location>
        <position position="788"/>
    </location>
    <ligand>
        <name>a divalent metal cation</name>
        <dbReference type="ChEBI" id="CHEBI:60240"/>
    </ligand>
</feature>
<feature type="binding site" evidence="1">
    <location>
        <position position="921"/>
    </location>
    <ligand>
        <name>substrate</name>
    </ligand>
</feature>
<feature type="modified residue" description="N6-carboxylysine" evidence="1">
    <location>
        <position position="756"/>
    </location>
</feature>
<feature type="modified residue" description="N6-biotinyllysine" evidence="1 3">
    <location>
        <position position="1157"/>
    </location>
</feature>
<organism>
    <name type="scientific">Aspergillus terreus (strain NIH 2624 / FGSC A1156)</name>
    <dbReference type="NCBI Taxonomy" id="341663"/>
    <lineage>
        <taxon>Eukaryota</taxon>
        <taxon>Fungi</taxon>
        <taxon>Dikarya</taxon>
        <taxon>Ascomycota</taxon>
        <taxon>Pezizomycotina</taxon>
        <taxon>Eurotiomycetes</taxon>
        <taxon>Eurotiomycetidae</taxon>
        <taxon>Eurotiales</taxon>
        <taxon>Aspergillaceae</taxon>
        <taxon>Aspergillus</taxon>
        <taxon>Aspergillus subgen. Circumdati</taxon>
    </lineage>
</organism>